<reference key="1">
    <citation type="journal article" date="2005" name="Eur. J. Immunol.">
        <title>Variety of antimicrobial peptides in the Bombina maxima toad and evidence of their rapid diversification.</title>
        <authorList>
            <person name="Lee W.-H."/>
            <person name="Li Y."/>
            <person name="Lai R."/>
            <person name="Li S."/>
            <person name="Zhang Y."/>
            <person name="Wang W."/>
        </authorList>
    </citation>
    <scope>NUCLEOTIDE SEQUENCE [MRNA]</scope>
    <scope>PROTEIN SEQUENCE OF 44-70 AND 124-143</scope>
    <scope>AMIDATION AT ASN-70 AND ILE-143</scope>
    <scope>MASS SPECTROMETRY</scope>
    <source>
        <tissue>Skin</tissue>
    </source>
</reference>
<reference key="2">
    <citation type="journal article" date="2002" name="Peptides">
        <title>Antimicrobial peptides from skin secretions of Chinese red belly toad Bombina maxima.</title>
        <authorList>
            <person name="Lai R."/>
            <person name="Zheng Y.-T."/>
            <person name="Shen J.-H."/>
            <person name="Liu G.-J."/>
            <person name="Liu H."/>
            <person name="Lee W.-H."/>
            <person name="Tang S.-Z."/>
            <person name="Zhang Y."/>
        </authorList>
    </citation>
    <scope>PROTEIN SEQUENCE OF 44-70</scope>
    <scope>AMIDATION AT ASN-70</scope>
    <scope>MASS SPECTROMETRY</scope>
    <scope>FUNCTION OF MAXIMIN-1</scope>
</reference>
<proteinExistence type="evidence at protein level"/>
<name>M1H12_BOMMX</name>
<evidence type="ECO:0000250" key="1"/>
<evidence type="ECO:0000255" key="2"/>
<evidence type="ECO:0000269" key="3">
    <source>
    </source>
</evidence>
<evidence type="ECO:0000269" key="4">
    <source>
    </source>
</evidence>
<evidence type="ECO:0000305" key="5"/>
<feature type="signal peptide" evidence="2">
    <location>
        <begin position="1"/>
        <end position="18"/>
    </location>
</feature>
<feature type="propeptide" id="PRO_0000003084" evidence="3">
    <location>
        <begin position="19"/>
        <end position="43"/>
    </location>
</feature>
<feature type="peptide" id="PRO_0000003085" description="Maximin-1">
    <location>
        <begin position="44"/>
        <end position="70"/>
    </location>
</feature>
<feature type="propeptide" id="PRO_0000003086" evidence="1">
    <location>
        <begin position="74"/>
        <end position="123"/>
    </location>
</feature>
<feature type="peptide" id="PRO_0000003087" description="Maximin-H12">
    <location>
        <begin position="124"/>
        <end position="143"/>
    </location>
</feature>
<feature type="modified residue" description="Asparagine amide" evidence="3 4">
    <location>
        <position position="70"/>
    </location>
</feature>
<feature type="modified residue" description="Isoleucine amide" evidence="4">
    <location>
        <position position="143"/>
    </location>
</feature>
<sequence length="144" mass="16091">MNFKYIVAVSFLIASAYARSEENDEQSLSQRDVLEEESLREIRGIGTKILGGVKTALKGALKELASTYANGKRTAEEHEVMKRLEVVMRDLDSLDYPEEASERETRDFNQEEIANLYTKKEKRLLGPVLGLVSNALGGLLKNIG</sequence>
<protein>
    <recommendedName>
        <fullName>Maximins 1/H12</fullName>
    </recommendedName>
    <component>
        <recommendedName>
            <fullName>Maximin-1</fullName>
        </recommendedName>
    </component>
    <component>
        <recommendedName>
            <fullName>Maximin-H12</fullName>
        </recommendedName>
    </component>
</protein>
<dbReference type="EMBL" id="AY848973">
    <property type="protein sequence ID" value="AAX50194.1"/>
    <property type="molecule type" value="mRNA"/>
</dbReference>
<dbReference type="SMR" id="Q58T87"/>
<dbReference type="GO" id="GO:0005576">
    <property type="term" value="C:extracellular region"/>
    <property type="evidence" value="ECO:0007669"/>
    <property type="project" value="UniProtKB-SubCell"/>
</dbReference>
<dbReference type="GO" id="GO:0042742">
    <property type="term" value="P:defense response to bacterium"/>
    <property type="evidence" value="ECO:0007669"/>
    <property type="project" value="UniProtKB-KW"/>
</dbReference>
<dbReference type="GO" id="GO:0050832">
    <property type="term" value="P:defense response to fungus"/>
    <property type="evidence" value="ECO:0007669"/>
    <property type="project" value="UniProtKB-KW"/>
</dbReference>
<dbReference type="GO" id="GO:0031640">
    <property type="term" value="P:killing of cells of another organism"/>
    <property type="evidence" value="ECO:0007669"/>
    <property type="project" value="UniProtKB-KW"/>
</dbReference>
<dbReference type="InterPro" id="IPR007962">
    <property type="entry name" value="Bombinin"/>
</dbReference>
<dbReference type="Pfam" id="PF05298">
    <property type="entry name" value="Bombinin"/>
    <property type="match status" value="1"/>
</dbReference>
<comment type="function">
    <text evidence="3">Maximin-1 shows antibacterial activity against both Gram-positive and Gram-negative bacteria. It also shows antimicrobial activity against the fungus C.albicans, but not against A.flavus nor P.uticale. It has little hemolytic activity. It possess a significant cytotoxicity against tumor cell lines. It does not possess a significant anti-HIV activity. It shows high spermicidal activity.</text>
</comment>
<comment type="function">
    <text evidence="1">Maximin-H12 shows antimicrobial activity against bacteria and against the fungus C.albicans. Shows strong hemolytic activity (By similarity).</text>
</comment>
<comment type="subcellular location">
    <subcellularLocation>
        <location>Secreted</location>
    </subcellularLocation>
</comment>
<comment type="tissue specificity">
    <text>Expressed by the skin glands.</text>
</comment>
<comment type="mass spectrometry" mass="2674.0" method="FAB" evidence="3">
    <molecule>Maximin-1</molecule>
</comment>
<comment type="similarity">
    <text evidence="5">Belongs to the bombinin family.</text>
</comment>
<keyword id="KW-0027">Amidation</keyword>
<keyword id="KW-0878">Amphibian defense peptide</keyword>
<keyword id="KW-0044">Antibiotic</keyword>
<keyword id="KW-0929">Antimicrobial</keyword>
<keyword id="KW-0165">Cleavage on pair of basic residues</keyword>
<keyword id="KW-0204">Cytolysis</keyword>
<keyword id="KW-0903">Direct protein sequencing</keyword>
<keyword id="KW-0295">Fungicide</keyword>
<keyword id="KW-0354">Hemolysis</keyword>
<keyword id="KW-0964">Secreted</keyword>
<keyword id="KW-0732">Signal</keyword>
<organism>
    <name type="scientific">Bombina maxima</name>
    <name type="common">Giant fire-bellied toad</name>
    <name type="synonym">Chinese red belly toad</name>
    <dbReference type="NCBI Taxonomy" id="161274"/>
    <lineage>
        <taxon>Eukaryota</taxon>
        <taxon>Metazoa</taxon>
        <taxon>Chordata</taxon>
        <taxon>Craniata</taxon>
        <taxon>Vertebrata</taxon>
        <taxon>Euteleostomi</taxon>
        <taxon>Amphibia</taxon>
        <taxon>Batrachia</taxon>
        <taxon>Anura</taxon>
        <taxon>Bombinatoridae</taxon>
        <taxon>Bombina</taxon>
    </lineage>
</organism>
<accession>Q58T87</accession>